<gene>
    <name evidence="1" type="primary">pnp</name>
    <name type="ordered locus">ECS88_3548</name>
</gene>
<proteinExistence type="inferred from homology"/>
<dbReference type="EC" id="2.7.7.8" evidence="1"/>
<dbReference type="EMBL" id="CU928161">
    <property type="protein sequence ID" value="CAR04776.1"/>
    <property type="status" value="ALT_INIT"/>
    <property type="molecule type" value="Genomic_DNA"/>
</dbReference>
<dbReference type="RefSeq" id="WP_001298330.1">
    <property type="nucleotide sequence ID" value="NC_011742.1"/>
</dbReference>
<dbReference type="SMR" id="B7MB85"/>
<dbReference type="KEGG" id="ecz:ECS88_3548"/>
<dbReference type="HOGENOM" id="CLU_004217_2_2_6"/>
<dbReference type="Proteomes" id="UP000000747">
    <property type="component" value="Chromosome"/>
</dbReference>
<dbReference type="GO" id="GO:0005829">
    <property type="term" value="C:cytosol"/>
    <property type="evidence" value="ECO:0007669"/>
    <property type="project" value="TreeGrafter"/>
</dbReference>
<dbReference type="GO" id="GO:0000175">
    <property type="term" value="F:3'-5'-RNA exonuclease activity"/>
    <property type="evidence" value="ECO:0007669"/>
    <property type="project" value="TreeGrafter"/>
</dbReference>
<dbReference type="GO" id="GO:0000287">
    <property type="term" value="F:magnesium ion binding"/>
    <property type="evidence" value="ECO:0007669"/>
    <property type="project" value="UniProtKB-UniRule"/>
</dbReference>
<dbReference type="GO" id="GO:0004654">
    <property type="term" value="F:polyribonucleotide nucleotidyltransferase activity"/>
    <property type="evidence" value="ECO:0007669"/>
    <property type="project" value="UniProtKB-UniRule"/>
</dbReference>
<dbReference type="GO" id="GO:0003723">
    <property type="term" value="F:RNA binding"/>
    <property type="evidence" value="ECO:0007669"/>
    <property type="project" value="UniProtKB-UniRule"/>
</dbReference>
<dbReference type="GO" id="GO:0006402">
    <property type="term" value="P:mRNA catabolic process"/>
    <property type="evidence" value="ECO:0007669"/>
    <property type="project" value="UniProtKB-UniRule"/>
</dbReference>
<dbReference type="GO" id="GO:0006396">
    <property type="term" value="P:RNA processing"/>
    <property type="evidence" value="ECO:0007669"/>
    <property type="project" value="InterPro"/>
</dbReference>
<dbReference type="CDD" id="cd02393">
    <property type="entry name" value="KH-I_PNPase"/>
    <property type="match status" value="1"/>
</dbReference>
<dbReference type="CDD" id="cd11363">
    <property type="entry name" value="RNase_PH_PNPase_1"/>
    <property type="match status" value="1"/>
</dbReference>
<dbReference type="CDD" id="cd11364">
    <property type="entry name" value="RNase_PH_PNPase_2"/>
    <property type="match status" value="1"/>
</dbReference>
<dbReference type="CDD" id="cd04472">
    <property type="entry name" value="S1_PNPase"/>
    <property type="match status" value="1"/>
</dbReference>
<dbReference type="FunFam" id="2.40.50.140:FF:000023">
    <property type="entry name" value="Polyribonucleotide nucleotidyltransferase"/>
    <property type="match status" value="1"/>
</dbReference>
<dbReference type="FunFam" id="3.30.1370.10:FF:000001">
    <property type="entry name" value="Polyribonucleotide nucleotidyltransferase"/>
    <property type="match status" value="1"/>
</dbReference>
<dbReference type="FunFam" id="3.30.230.70:FF:000001">
    <property type="entry name" value="Polyribonucleotide nucleotidyltransferase"/>
    <property type="match status" value="1"/>
</dbReference>
<dbReference type="FunFam" id="3.30.230.70:FF:000002">
    <property type="entry name" value="Polyribonucleotide nucleotidyltransferase"/>
    <property type="match status" value="1"/>
</dbReference>
<dbReference type="Gene3D" id="3.30.230.70">
    <property type="entry name" value="GHMP Kinase, N-terminal domain"/>
    <property type="match status" value="2"/>
</dbReference>
<dbReference type="Gene3D" id="3.30.1370.10">
    <property type="entry name" value="K Homology domain, type 1"/>
    <property type="match status" value="1"/>
</dbReference>
<dbReference type="Gene3D" id="2.40.50.140">
    <property type="entry name" value="Nucleic acid-binding proteins"/>
    <property type="match status" value="1"/>
</dbReference>
<dbReference type="HAMAP" id="MF_01595">
    <property type="entry name" value="PNPase"/>
    <property type="match status" value="1"/>
</dbReference>
<dbReference type="InterPro" id="IPR001247">
    <property type="entry name" value="ExoRNase_PH_dom1"/>
</dbReference>
<dbReference type="InterPro" id="IPR015847">
    <property type="entry name" value="ExoRNase_PH_dom2"/>
</dbReference>
<dbReference type="InterPro" id="IPR036345">
    <property type="entry name" value="ExoRNase_PH_dom2_sf"/>
</dbReference>
<dbReference type="InterPro" id="IPR004087">
    <property type="entry name" value="KH_dom"/>
</dbReference>
<dbReference type="InterPro" id="IPR004088">
    <property type="entry name" value="KH_dom_type_1"/>
</dbReference>
<dbReference type="InterPro" id="IPR036612">
    <property type="entry name" value="KH_dom_type_1_sf"/>
</dbReference>
<dbReference type="InterPro" id="IPR012340">
    <property type="entry name" value="NA-bd_OB-fold"/>
</dbReference>
<dbReference type="InterPro" id="IPR012162">
    <property type="entry name" value="PNPase"/>
</dbReference>
<dbReference type="InterPro" id="IPR027408">
    <property type="entry name" value="PNPase/RNase_PH_dom_sf"/>
</dbReference>
<dbReference type="InterPro" id="IPR015848">
    <property type="entry name" value="PNPase_PH_RNA-bd_bac/org-type"/>
</dbReference>
<dbReference type="InterPro" id="IPR036456">
    <property type="entry name" value="PNPase_PH_RNA-bd_sf"/>
</dbReference>
<dbReference type="InterPro" id="IPR020568">
    <property type="entry name" value="Ribosomal_Su5_D2-typ_SF"/>
</dbReference>
<dbReference type="InterPro" id="IPR003029">
    <property type="entry name" value="S1_domain"/>
</dbReference>
<dbReference type="NCBIfam" id="TIGR03591">
    <property type="entry name" value="polynuc_phos"/>
    <property type="match status" value="1"/>
</dbReference>
<dbReference type="NCBIfam" id="NF008805">
    <property type="entry name" value="PRK11824.1"/>
    <property type="match status" value="1"/>
</dbReference>
<dbReference type="PANTHER" id="PTHR11252">
    <property type="entry name" value="POLYRIBONUCLEOTIDE NUCLEOTIDYLTRANSFERASE"/>
    <property type="match status" value="1"/>
</dbReference>
<dbReference type="PANTHER" id="PTHR11252:SF0">
    <property type="entry name" value="POLYRIBONUCLEOTIDE NUCLEOTIDYLTRANSFERASE 1, MITOCHONDRIAL"/>
    <property type="match status" value="1"/>
</dbReference>
<dbReference type="Pfam" id="PF00013">
    <property type="entry name" value="KH_1"/>
    <property type="match status" value="1"/>
</dbReference>
<dbReference type="Pfam" id="PF03726">
    <property type="entry name" value="PNPase"/>
    <property type="match status" value="1"/>
</dbReference>
<dbReference type="Pfam" id="PF01138">
    <property type="entry name" value="RNase_PH"/>
    <property type="match status" value="2"/>
</dbReference>
<dbReference type="Pfam" id="PF03725">
    <property type="entry name" value="RNase_PH_C"/>
    <property type="match status" value="2"/>
</dbReference>
<dbReference type="Pfam" id="PF00575">
    <property type="entry name" value="S1"/>
    <property type="match status" value="1"/>
</dbReference>
<dbReference type="PIRSF" id="PIRSF005499">
    <property type="entry name" value="PNPase"/>
    <property type="match status" value="1"/>
</dbReference>
<dbReference type="SMART" id="SM00322">
    <property type="entry name" value="KH"/>
    <property type="match status" value="1"/>
</dbReference>
<dbReference type="SMART" id="SM00316">
    <property type="entry name" value="S1"/>
    <property type="match status" value="1"/>
</dbReference>
<dbReference type="SUPFAM" id="SSF54791">
    <property type="entry name" value="Eukaryotic type KH-domain (KH-domain type I)"/>
    <property type="match status" value="1"/>
</dbReference>
<dbReference type="SUPFAM" id="SSF50249">
    <property type="entry name" value="Nucleic acid-binding proteins"/>
    <property type="match status" value="1"/>
</dbReference>
<dbReference type="SUPFAM" id="SSF46915">
    <property type="entry name" value="Polynucleotide phosphorylase/guanosine pentaphosphate synthase (PNPase/GPSI), domain 3"/>
    <property type="match status" value="1"/>
</dbReference>
<dbReference type="SUPFAM" id="SSF55666">
    <property type="entry name" value="Ribonuclease PH domain 2-like"/>
    <property type="match status" value="2"/>
</dbReference>
<dbReference type="SUPFAM" id="SSF54211">
    <property type="entry name" value="Ribosomal protein S5 domain 2-like"/>
    <property type="match status" value="2"/>
</dbReference>
<dbReference type="PROSITE" id="PS50084">
    <property type="entry name" value="KH_TYPE_1"/>
    <property type="match status" value="1"/>
</dbReference>
<dbReference type="PROSITE" id="PS50126">
    <property type="entry name" value="S1"/>
    <property type="match status" value="1"/>
</dbReference>
<evidence type="ECO:0000255" key="1">
    <source>
        <dbReference type="HAMAP-Rule" id="MF_01595"/>
    </source>
</evidence>
<evidence type="ECO:0000256" key="2">
    <source>
        <dbReference type="SAM" id="MobiDB-lite"/>
    </source>
</evidence>
<evidence type="ECO:0000305" key="3"/>
<feature type="chain" id="PRO_0000381891" description="Polyribonucleotide nucleotidyltransferase">
    <location>
        <begin position="1"/>
        <end position="711"/>
    </location>
</feature>
<feature type="domain" description="KH" evidence="1">
    <location>
        <begin position="553"/>
        <end position="612"/>
    </location>
</feature>
<feature type="domain" description="S1 motif" evidence="1">
    <location>
        <begin position="622"/>
        <end position="690"/>
    </location>
</feature>
<feature type="region of interest" description="Disordered" evidence="2">
    <location>
        <begin position="689"/>
        <end position="711"/>
    </location>
</feature>
<feature type="compositionally biased region" description="Low complexity" evidence="2">
    <location>
        <begin position="694"/>
        <end position="711"/>
    </location>
</feature>
<feature type="binding site" evidence="1">
    <location>
        <position position="486"/>
    </location>
    <ligand>
        <name>Mg(2+)</name>
        <dbReference type="ChEBI" id="CHEBI:18420"/>
    </ligand>
</feature>
<feature type="binding site" evidence="1">
    <location>
        <position position="492"/>
    </location>
    <ligand>
        <name>Mg(2+)</name>
        <dbReference type="ChEBI" id="CHEBI:18420"/>
    </ligand>
</feature>
<comment type="function">
    <text evidence="1">Involved in mRNA degradation. Catalyzes the phosphorolysis of single-stranded polyribonucleotides processively in the 3'- to 5'-direction.</text>
</comment>
<comment type="catalytic activity">
    <reaction evidence="1">
        <text>RNA(n+1) + phosphate = RNA(n) + a ribonucleoside 5'-diphosphate</text>
        <dbReference type="Rhea" id="RHEA:22096"/>
        <dbReference type="Rhea" id="RHEA-COMP:14527"/>
        <dbReference type="Rhea" id="RHEA-COMP:17342"/>
        <dbReference type="ChEBI" id="CHEBI:43474"/>
        <dbReference type="ChEBI" id="CHEBI:57930"/>
        <dbReference type="ChEBI" id="CHEBI:140395"/>
        <dbReference type="EC" id="2.7.7.8"/>
    </reaction>
</comment>
<comment type="cofactor">
    <cofactor evidence="1">
        <name>Mg(2+)</name>
        <dbReference type="ChEBI" id="CHEBI:18420"/>
    </cofactor>
</comment>
<comment type="subunit">
    <text evidence="1">Component of the RNA degradosome, which is a multiprotein complex involved in RNA processing and mRNA degradation.</text>
</comment>
<comment type="subcellular location">
    <subcellularLocation>
        <location evidence="1">Cytoplasm</location>
    </subcellularLocation>
</comment>
<comment type="similarity">
    <text evidence="1">Belongs to the polyribonucleotide nucleotidyltransferase family.</text>
</comment>
<comment type="sequence caution" evidence="3">
    <conflict type="erroneous initiation">
        <sequence resource="EMBL-CDS" id="CAR04776"/>
    </conflict>
</comment>
<keyword id="KW-0963">Cytoplasm</keyword>
<keyword id="KW-0460">Magnesium</keyword>
<keyword id="KW-0479">Metal-binding</keyword>
<keyword id="KW-0548">Nucleotidyltransferase</keyword>
<keyword id="KW-1185">Reference proteome</keyword>
<keyword id="KW-0694">RNA-binding</keyword>
<keyword id="KW-0808">Transferase</keyword>
<accession>B7MB85</accession>
<reference key="1">
    <citation type="journal article" date="2009" name="PLoS Genet.">
        <title>Organised genome dynamics in the Escherichia coli species results in highly diverse adaptive paths.</title>
        <authorList>
            <person name="Touchon M."/>
            <person name="Hoede C."/>
            <person name="Tenaillon O."/>
            <person name="Barbe V."/>
            <person name="Baeriswyl S."/>
            <person name="Bidet P."/>
            <person name="Bingen E."/>
            <person name="Bonacorsi S."/>
            <person name="Bouchier C."/>
            <person name="Bouvet O."/>
            <person name="Calteau A."/>
            <person name="Chiapello H."/>
            <person name="Clermont O."/>
            <person name="Cruveiller S."/>
            <person name="Danchin A."/>
            <person name="Diard M."/>
            <person name="Dossat C."/>
            <person name="Karoui M.E."/>
            <person name="Frapy E."/>
            <person name="Garry L."/>
            <person name="Ghigo J.M."/>
            <person name="Gilles A.M."/>
            <person name="Johnson J."/>
            <person name="Le Bouguenec C."/>
            <person name="Lescat M."/>
            <person name="Mangenot S."/>
            <person name="Martinez-Jehanne V."/>
            <person name="Matic I."/>
            <person name="Nassif X."/>
            <person name="Oztas S."/>
            <person name="Petit M.A."/>
            <person name="Pichon C."/>
            <person name="Rouy Z."/>
            <person name="Ruf C.S."/>
            <person name="Schneider D."/>
            <person name="Tourret J."/>
            <person name="Vacherie B."/>
            <person name="Vallenet D."/>
            <person name="Medigue C."/>
            <person name="Rocha E.P.C."/>
            <person name="Denamur E."/>
        </authorList>
    </citation>
    <scope>NUCLEOTIDE SEQUENCE [LARGE SCALE GENOMIC DNA]</scope>
    <source>
        <strain>S88 / ExPEC</strain>
    </source>
</reference>
<name>PNP_ECO45</name>
<organism>
    <name type="scientific">Escherichia coli O45:K1 (strain S88 / ExPEC)</name>
    <dbReference type="NCBI Taxonomy" id="585035"/>
    <lineage>
        <taxon>Bacteria</taxon>
        <taxon>Pseudomonadati</taxon>
        <taxon>Pseudomonadota</taxon>
        <taxon>Gammaproteobacteria</taxon>
        <taxon>Enterobacterales</taxon>
        <taxon>Enterobacteriaceae</taxon>
        <taxon>Escherichia</taxon>
    </lineage>
</organism>
<sequence length="711" mass="77115">MLNPIVRKFQYGQHTVTLETGMMARQATAAVMVSMDDTAVFVTVVGQKKAKPGQDFFPLTVNYQERTYAAGRIPGSFFRREGRPSEGETLIARLIDRPIRPLFPEGFVNEVQVIATVVSVNPQVNPDIVAMIGASAALSLSGIPFNGPIGAARVGYINDQYVLNPTQDELKESKLDLVVAGTEAAVLMVESEAELLSEDQMLGAVVFGHEQQQVVIQNINELVKEAGKPRWDWQPEPVNEALNARVAALAEARLSDAYRITDKQERYAQVDVIKSETIATLLAEDETLDENELGEILHAIEKNVVRSRVLAGEPRIDGREKDMIRGLDVRTGVLPRTHGSALFTRGETQALVTATLGTARDAQVLDELMGERTDTFLFHYNFPPYSVGETGMVGSPKRREIGHGRLAKRGVLAVMPDMDKFPYTVRVVSEITESNGSSSMASVCGASLALMDAGVPIKAAVAGIAMGLVKEGDNYVVLSDILGDEDHLGDMDFKVAGSRDGISALQMDIKIEGITKEIMQVALNQAKGARLHILGVMEQAINAPRGDISEFAPRIHTIKINPDKIKDVIGKGGSVIRALTEETGTTIEIEDDGTVKIAATDGEKAKHAIRRIEEITAEIEVGRVYNGKVTRIVDFGAFVAIGGGKEGLVHISQIADKRVEKVTDYLQMGQEVPVKVLEVDRQGRIRLSIKEATEQSQPAAAPEAPAAEQGE</sequence>
<protein>
    <recommendedName>
        <fullName evidence="1">Polyribonucleotide nucleotidyltransferase</fullName>
        <ecNumber evidence="1">2.7.7.8</ecNumber>
    </recommendedName>
    <alternativeName>
        <fullName evidence="1">Polynucleotide phosphorylase</fullName>
        <shortName evidence="1">PNPase</shortName>
    </alternativeName>
</protein>